<keyword id="KW-0285">Flavoprotein</keyword>
<keyword id="KW-0288">FMN</keyword>
<keyword id="KW-0560">Oxidoreductase</keyword>
<keyword id="KW-0664">Pyridoxine biosynthesis</keyword>
<comment type="function">
    <text evidence="1">Catalyzes the oxidation of either pyridoxine 5'-phosphate (PNP) or pyridoxamine 5'-phosphate (PMP) into pyridoxal 5'-phosphate (PLP).</text>
</comment>
<comment type="catalytic activity">
    <reaction evidence="1">
        <text>pyridoxamine 5'-phosphate + O2 + H2O = pyridoxal 5'-phosphate + H2O2 + NH4(+)</text>
        <dbReference type="Rhea" id="RHEA:15817"/>
        <dbReference type="ChEBI" id="CHEBI:15377"/>
        <dbReference type="ChEBI" id="CHEBI:15379"/>
        <dbReference type="ChEBI" id="CHEBI:16240"/>
        <dbReference type="ChEBI" id="CHEBI:28938"/>
        <dbReference type="ChEBI" id="CHEBI:58451"/>
        <dbReference type="ChEBI" id="CHEBI:597326"/>
        <dbReference type="EC" id="1.4.3.5"/>
    </reaction>
</comment>
<comment type="catalytic activity">
    <reaction evidence="1">
        <text>pyridoxine 5'-phosphate + O2 = pyridoxal 5'-phosphate + H2O2</text>
        <dbReference type="Rhea" id="RHEA:15149"/>
        <dbReference type="ChEBI" id="CHEBI:15379"/>
        <dbReference type="ChEBI" id="CHEBI:16240"/>
        <dbReference type="ChEBI" id="CHEBI:58589"/>
        <dbReference type="ChEBI" id="CHEBI:597326"/>
        <dbReference type="EC" id="1.4.3.5"/>
    </reaction>
</comment>
<comment type="cofactor">
    <cofactor evidence="1">
        <name>FMN</name>
        <dbReference type="ChEBI" id="CHEBI:58210"/>
    </cofactor>
    <text evidence="1">Binds 1 FMN per subunit.</text>
</comment>
<comment type="pathway">
    <text evidence="1">Cofactor metabolism; pyridoxal 5'-phosphate salvage; pyridoxal 5'-phosphate from pyridoxamine 5'-phosphate: step 1/1.</text>
</comment>
<comment type="pathway">
    <text evidence="1">Cofactor metabolism; pyridoxal 5'-phosphate salvage; pyridoxal 5'-phosphate from pyridoxine 5'-phosphate: step 1/1.</text>
</comment>
<comment type="subunit">
    <text evidence="1">Homodimer.</text>
</comment>
<comment type="similarity">
    <text evidence="1">Belongs to the pyridoxamine 5'-phosphate oxidase family.</text>
</comment>
<accession>B0BU37</accession>
<evidence type="ECO:0000255" key="1">
    <source>
        <dbReference type="HAMAP-Rule" id="MF_01629"/>
    </source>
</evidence>
<organism>
    <name type="scientific">Actinobacillus pleuropneumoniae serotype 3 (strain JL03)</name>
    <dbReference type="NCBI Taxonomy" id="434271"/>
    <lineage>
        <taxon>Bacteria</taxon>
        <taxon>Pseudomonadati</taxon>
        <taxon>Pseudomonadota</taxon>
        <taxon>Gammaproteobacteria</taxon>
        <taxon>Pasteurellales</taxon>
        <taxon>Pasteurellaceae</taxon>
        <taxon>Actinobacillus</taxon>
    </lineage>
</organism>
<name>PDXH_ACTPJ</name>
<proteinExistence type="inferred from homology"/>
<dbReference type="EC" id="1.4.3.5" evidence="1"/>
<dbReference type="EMBL" id="CP000687">
    <property type="protein sequence ID" value="ABY70604.1"/>
    <property type="molecule type" value="Genomic_DNA"/>
</dbReference>
<dbReference type="RefSeq" id="WP_012263482.1">
    <property type="nucleotide sequence ID" value="NC_010278.1"/>
</dbReference>
<dbReference type="SMR" id="B0BU37"/>
<dbReference type="KEGG" id="apj:APJL_2059"/>
<dbReference type="HOGENOM" id="CLU_032263_2_2_6"/>
<dbReference type="UniPathway" id="UPA01068">
    <property type="reaction ID" value="UER00304"/>
</dbReference>
<dbReference type="UniPathway" id="UPA01068">
    <property type="reaction ID" value="UER00305"/>
</dbReference>
<dbReference type="Proteomes" id="UP000008547">
    <property type="component" value="Chromosome"/>
</dbReference>
<dbReference type="GO" id="GO:0010181">
    <property type="term" value="F:FMN binding"/>
    <property type="evidence" value="ECO:0007669"/>
    <property type="project" value="UniProtKB-UniRule"/>
</dbReference>
<dbReference type="GO" id="GO:0004733">
    <property type="term" value="F:pyridoxamine phosphate oxidase activity"/>
    <property type="evidence" value="ECO:0007669"/>
    <property type="project" value="UniProtKB-UniRule"/>
</dbReference>
<dbReference type="GO" id="GO:0008615">
    <property type="term" value="P:pyridoxine biosynthetic process"/>
    <property type="evidence" value="ECO:0007669"/>
    <property type="project" value="UniProtKB-KW"/>
</dbReference>
<dbReference type="FunFam" id="2.30.110.10:FF:000014">
    <property type="entry name" value="Pyridoxine/pyridoxamine 5'-phosphate oxidase"/>
    <property type="match status" value="1"/>
</dbReference>
<dbReference type="Gene3D" id="2.30.110.10">
    <property type="entry name" value="Electron Transport, Fmn-binding Protein, Chain A"/>
    <property type="match status" value="1"/>
</dbReference>
<dbReference type="HAMAP" id="MF_01629">
    <property type="entry name" value="PdxH"/>
    <property type="match status" value="1"/>
</dbReference>
<dbReference type="InterPro" id="IPR000659">
    <property type="entry name" value="Pyridox_Oxase"/>
</dbReference>
<dbReference type="InterPro" id="IPR019740">
    <property type="entry name" value="Pyridox_Oxase_CS"/>
</dbReference>
<dbReference type="InterPro" id="IPR011576">
    <property type="entry name" value="Pyridox_Oxase_N"/>
</dbReference>
<dbReference type="InterPro" id="IPR019576">
    <property type="entry name" value="Pyridoxamine_oxidase_dimer_C"/>
</dbReference>
<dbReference type="InterPro" id="IPR012349">
    <property type="entry name" value="Split_barrel_FMN-bd"/>
</dbReference>
<dbReference type="NCBIfam" id="TIGR00558">
    <property type="entry name" value="pdxH"/>
    <property type="match status" value="1"/>
</dbReference>
<dbReference type="NCBIfam" id="NF004231">
    <property type="entry name" value="PRK05679.1"/>
    <property type="match status" value="1"/>
</dbReference>
<dbReference type="PANTHER" id="PTHR10851:SF0">
    <property type="entry name" value="PYRIDOXINE-5'-PHOSPHATE OXIDASE"/>
    <property type="match status" value="1"/>
</dbReference>
<dbReference type="PANTHER" id="PTHR10851">
    <property type="entry name" value="PYRIDOXINE-5-PHOSPHATE OXIDASE"/>
    <property type="match status" value="1"/>
</dbReference>
<dbReference type="Pfam" id="PF10590">
    <property type="entry name" value="PNP_phzG_C"/>
    <property type="match status" value="1"/>
</dbReference>
<dbReference type="Pfam" id="PF01243">
    <property type="entry name" value="PNPOx_N"/>
    <property type="match status" value="1"/>
</dbReference>
<dbReference type="PIRSF" id="PIRSF000190">
    <property type="entry name" value="Pyd_amn-ph_oxd"/>
    <property type="match status" value="1"/>
</dbReference>
<dbReference type="SUPFAM" id="SSF50475">
    <property type="entry name" value="FMN-binding split barrel"/>
    <property type="match status" value="1"/>
</dbReference>
<dbReference type="PROSITE" id="PS01064">
    <property type="entry name" value="PYRIDOX_OXIDASE"/>
    <property type="match status" value="1"/>
</dbReference>
<feature type="chain" id="PRO_0000335777" description="Pyridoxine/pyridoxamine 5'-phosphate oxidase">
    <location>
        <begin position="1"/>
        <end position="209"/>
    </location>
</feature>
<feature type="binding site" evidence="1">
    <location>
        <begin position="7"/>
        <end position="10"/>
    </location>
    <ligand>
        <name>substrate</name>
    </ligand>
</feature>
<feature type="binding site" evidence="1">
    <location>
        <begin position="59"/>
        <end position="64"/>
    </location>
    <ligand>
        <name>FMN</name>
        <dbReference type="ChEBI" id="CHEBI:58210"/>
    </ligand>
</feature>
<feature type="binding site" evidence="1">
    <location>
        <position position="64"/>
    </location>
    <ligand>
        <name>substrate</name>
    </ligand>
</feature>
<feature type="binding site" evidence="1">
    <location>
        <begin position="74"/>
        <end position="75"/>
    </location>
    <ligand>
        <name>FMN</name>
        <dbReference type="ChEBI" id="CHEBI:58210"/>
    </ligand>
</feature>
<feature type="binding site" evidence="1">
    <location>
        <position position="80"/>
    </location>
    <ligand>
        <name>FMN</name>
        <dbReference type="ChEBI" id="CHEBI:58210"/>
    </ligand>
</feature>
<feature type="binding site" evidence="1">
    <location>
        <position position="81"/>
    </location>
    <ligand>
        <name>FMN</name>
        <dbReference type="ChEBI" id="CHEBI:58210"/>
    </ligand>
</feature>
<feature type="binding site" evidence="1">
    <location>
        <position position="121"/>
    </location>
    <ligand>
        <name>substrate</name>
    </ligand>
</feature>
<feature type="binding site" evidence="1">
    <location>
        <position position="125"/>
    </location>
    <ligand>
        <name>substrate</name>
    </ligand>
</feature>
<feature type="binding site" evidence="1">
    <location>
        <position position="129"/>
    </location>
    <ligand>
        <name>substrate</name>
    </ligand>
</feature>
<feature type="binding site" evidence="1">
    <location>
        <begin position="138"/>
        <end position="139"/>
    </location>
    <ligand>
        <name>FMN</name>
        <dbReference type="ChEBI" id="CHEBI:58210"/>
    </ligand>
</feature>
<feature type="binding site" evidence="1">
    <location>
        <position position="182"/>
    </location>
    <ligand>
        <name>FMN</name>
        <dbReference type="ChEBI" id="CHEBI:58210"/>
    </ligand>
</feature>
<feature type="binding site" evidence="1">
    <location>
        <begin position="188"/>
        <end position="190"/>
    </location>
    <ligand>
        <name>substrate</name>
    </ligand>
</feature>
<feature type="binding site" evidence="1">
    <location>
        <position position="192"/>
    </location>
    <ligand>
        <name>FMN</name>
        <dbReference type="ChEBI" id="CHEBI:58210"/>
    </ligand>
</feature>
<protein>
    <recommendedName>
        <fullName evidence="1">Pyridoxine/pyridoxamine 5'-phosphate oxidase</fullName>
        <ecNumber evidence="1">1.4.3.5</ecNumber>
    </recommendedName>
    <alternativeName>
        <fullName evidence="1">PNP/PMP oxidase</fullName>
        <shortName evidence="1">PNPOx</shortName>
    </alternativeName>
    <alternativeName>
        <fullName evidence="1">Pyridoxal 5'-phosphate synthase</fullName>
    </alternativeName>
</protein>
<sequence>MDLHNIREDYSKQELSQAHCHADPIQQFEQWLEEAITAKANEPTAMNVATVLDGKPTSRIVLLKEVNPNGFVFFTNYQSRKGQAIEQNPYAALTFFWAELERSVRIEGRIEKISAEESDRYFASRPYTSRVGAWASNQSQVLSGKSELVAKAALIAAKHPLHVPRPPHWGGYIVLPERIEFWQGRPSRLHDRICYRLVEGKWHKERLSP</sequence>
<reference key="1">
    <citation type="journal article" date="2008" name="PLoS ONE">
        <title>Genome biology of Actinobacillus pleuropneumoniae JL03, an isolate of serotype 3 prevalent in China.</title>
        <authorList>
            <person name="Xu Z."/>
            <person name="Zhou Y."/>
            <person name="Li L."/>
            <person name="Zhou R."/>
            <person name="Xiao S."/>
            <person name="Wan Y."/>
            <person name="Zhang S."/>
            <person name="Wang K."/>
            <person name="Li W."/>
            <person name="Li L."/>
            <person name="Jin H."/>
            <person name="Kang M."/>
            <person name="Dalai B."/>
            <person name="Li T."/>
            <person name="Liu L."/>
            <person name="Cheng Y."/>
            <person name="Zhang L."/>
            <person name="Xu T."/>
            <person name="Zheng H."/>
            <person name="Pu S."/>
            <person name="Wang B."/>
            <person name="Gu W."/>
            <person name="Zhang X.L."/>
            <person name="Zhu G.-F."/>
            <person name="Wang S."/>
            <person name="Zhao G.-P."/>
            <person name="Chen H."/>
        </authorList>
    </citation>
    <scope>NUCLEOTIDE SEQUENCE [LARGE SCALE GENOMIC DNA]</scope>
    <source>
        <strain>JL03</strain>
    </source>
</reference>
<gene>
    <name evidence="1" type="primary">pdxH</name>
    <name type="ordered locus">APJL_2059</name>
</gene>